<protein>
    <recommendedName>
        <fullName>Putative uncharacterized protein YA5053W</fullName>
    </recommendedName>
</protein>
<dbReference type="EMBL" id="L28920">
    <property type="protein sequence ID" value="AAC09500.1"/>
    <property type="molecule type" value="Genomic_DNA"/>
</dbReference>
<dbReference type="EMBL" id="AY693274">
    <property type="protein sequence ID" value="AAT93293.1"/>
    <property type="molecule type" value="Genomic_DNA"/>
</dbReference>
<dbReference type="PIR" id="S53467">
    <property type="entry name" value="S53467"/>
</dbReference>
<dbReference type="STRING" id="4932.YAR053W"/>
<dbReference type="PaxDb" id="4932-YAR053W"/>
<dbReference type="EnsemblFungi" id="YAR053W_mRNA">
    <property type="protein sequence ID" value="YAR053W"/>
    <property type="gene ID" value="YAR053W"/>
</dbReference>
<dbReference type="AGR" id="SGD:S000000085"/>
<dbReference type="SGD" id="S000000085">
    <property type="gene designation" value="YAR053W"/>
</dbReference>
<dbReference type="HOGENOM" id="CLU_2335251_0_0_1"/>
<dbReference type="GO" id="GO:0016020">
    <property type="term" value="C:membrane"/>
    <property type="evidence" value="ECO:0007669"/>
    <property type="project" value="UniProtKB-SubCell"/>
</dbReference>
<comment type="subcellular location">
    <subcellularLocation>
        <location evidence="2">Membrane</location>
        <topology evidence="2">Multi-pass membrane protein</topology>
    </subcellularLocation>
</comment>
<comment type="caution">
    <text evidence="3">Product of a dubious gene prediction unlikely to encode a functional protein. Because of that it is not part of the S.cerevisiae S288c complete/reference proteome set.</text>
</comment>
<organism>
    <name type="scientific">Saccharomyces cerevisiae (strain ATCC 204508 / S288c)</name>
    <name type="common">Baker's yeast</name>
    <dbReference type="NCBI Taxonomy" id="559292"/>
    <lineage>
        <taxon>Eukaryota</taxon>
        <taxon>Fungi</taxon>
        <taxon>Dikarya</taxon>
        <taxon>Ascomycota</taxon>
        <taxon>Saccharomycotina</taxon>
        <taxon>Saccharomycetes</taxon>
        <taxon>Saccharomycetales</taxon>
        <taxon>Saccharomycetaceae</taxon>
        <taxon>Saccharomyces</taxon>
    </lineage>
</organism>
<accession>P39559</accession>
<evidence type="ECO:0000255" key="1"/>
<evidence type="ECO:0000305" key="2"/>
<evidence type="ECO:0000305" key="3">
    <source>
    </source>
</evidence>
<reference key="1">
    <citation type="submission" date="1994-02" db="EMBL/GenBank/DDBJ databases">
        <title>Sequencing of chromosome I of Saccharomyces cerevisiae: analysis of the 52 Kbp CDC15-FLO1-PHO11-YAR074 region.</title>
        <authorList>
            <person name="Bussey H."/>
            <person name="Keng T."/>
            <person name="Storms R.K."/>
            <person name="Vo D."/>
            <person name="Zhong W."/>
            <person name="Fortin N."/>
            <person name="Barton A.B."/>
            <person name="Kaback D.B."/>
            <person name="Clark M.W."/>
        </authorList>
    </citation>
    <scope>NUCLEOTIDE SEQUENCE [GENOMIC DNA]</scope>
    <source>
        <strain>ATCC 204511 / S288c / AB972</strain>
    </source>
</reference>
<reference key="2">
    <citation type="journal article" date="1995" name="Proc. Natl. Acad. Sci. U.S.A.">
        <title>The nucleotide sequence of chromosome I from Saccharomyces cerevisiae.</title>
        <authorList>
            <person name="Bussey H."/>
            <person name="Kaback D.B."/>
            <person name="Zhong W.-W."/>
            <person name="Vo D.H."/>
            <person name="Clark M.W."/>
            <person name="Fortin N."/>
            <person name="Hall J."/>
            <person name="Ouellette B.F.F."/>
            <person name="Keng T."/>
            <person name="Barton A.B."/>
            <person name="Su Y."/>
            <person name="Davies C.J."/>
            <person name="Storms R.K."/>
        </authorList>
    </citation>
    <scope>NUCLEOTIDE SEQUENCE [LARGE SCALE GENOMIC DNA]</scope>
    <source>
        <strain>ATCC 204508 / S288c</strain>
    </source>
</reference>
<reference key="3">
    <citation type="journal article" date="2014" name="G3 (Bethesda)">
        <title>The reference genome sequence of Saccharomyces cerevisiae: Then and now.</title>
        <authorList>
            <person name="Engel S.R."/>
            <person name="Dietrich F.S."/>
            <person name="Fisk D.G."/>
            <person name="Binkley G."/>
            <person name="Balakrishnan R."/>
            <person name="Costanzo M.C."/>
            <person name="Dwight S.S."/>
            <person name="Hitz B.C."/>
            <person name="Karra K."/>
            <person name="Nash R.S."/>
            <person name="Weng S."/>
            <person name="Wong E.D."/>
            <person name="Lloyd P."/>
            <person name="Skrzypek M.S."/>
            <person name="Miyasato S.R."/>
            <person name="Simison M."/>
            <person name="Cherry J.M."/>
        </authorList>
    </citation>
    <scope>GENOME REANNOTATION</scope>
    <source>
        <strain>ATCC 204508 / S288c</strain>
    </source>
</reference>
<reference key="4">
    <citation type="journal article" date="2007" name="Genome Res.">
        <title>Approaching a complete repository of sequence-verified protein-encoding clones for Saccharomyces cerevisiae.</title>
        <authorList>
            <person name="Hu Y."/>
            <person name="Rolfs A."/>
            <person name="Bhullar B."/>
            <person name="Murthy T.V.S."/>
            <person name="Zhu C."/>
            <person name="Berger M.F."/>
            <person name="Camargo A.A."/>
            <person name="Kelley F."/>
            <person name="McCarron S."/>
            <person name="Jepson D."/>
            <person name="Richardson A."/>
            <person name="Raphael J."/>
            <person name="Moreira D."/>
            <person name="Taycher E."/>
            <person name="Zuo D."/>
            <person name="Mohr S."/>
            <person name="Kane M.F."/>
            <person name="Williamson J."/>
            <person name="Simpson A.J.G."/>
            <person name="Bulyk M.L."/>
            <person name="Harlow E."/>
            <person name="Marsischky G."/>
            <person name="Kolodner R.D."/>
            <person name="LaBaer J."/>
        </authorList>
    </citation>
    <scope>NUCLEOTIDE SEQUENCE [GENOMIC DNA]</scope>
    <source>
        <strain>ATCC 204508 / S288c</strain>
    </source>
</reference>
<name>YAM3_YEAST</name>
<proteinExistence type="uncertain"/>
<gene>
    <name type="ordered locus">YAR053W</name>
</gene>
<sequence length="98" mass="11143">MYEYLLLTRKNALFSLAINEPSPTFALTIIAIFSSTNVRSSVVRLGCFRVEICCTCHTQYLKLEIMVIISYLKYVNLPCSFIFISNSFALVFKISAEV</sequence>
<feature type="chain" id="PRO_0000202429" description="Putative uncharacterized protein YA5053W">
    <location>
        <begin position="1"/>
        <end position="98"/>
    </location>
</feature>
<feature type="transmembrane region" description="Helical" evidence="1">
    <location>
        <begin position="13"/>
        <end position="33"/>
    </location>
</feature>
<feature type="transmembrane region" description="Helical" evidence="1">
    <location>
        <begin position="65"/>
        <end position="85"/>
    </location>
</feature>
<keyword id="KW-0472">Membrane</keyword>
<keyword id="KW-0812">Transmembrane</keyword>
<keyword id="KW-1133">Transmembrane helix</keyword>